<name>CDC26_CAEEL</name>
<feature type="chain" id="PRO_0000435331" description="Anaphase-promoting complex subunit CDC26" evidence="5">
    <location>
        <begin position="1"/>
        <end position="194"/>
    </location>
</feature>
<feature type="region of interest" description="Disordered" evidence="3">
    <location>
        <begin position="47"/>
        <end position="194"/>
    </location>
</feature>
<feature type="compositionally biased region" description="Polar residues" evidence="3">
    <location>
        <begin position="79"/>
        <end position="94"/>
    </location>
</feature>
<feature type="compositionally biased region" description="Polar residues" evidence="3">
    <location>
        <begin position="102"/>
        <end position="112"/>
    </location>
</feature>
<feature type="compositionally biased region" description="Low complexity" evidence="3">
    <location>
        <begin position="154"/>
        <end position="166"/>
    </location>
</feature>
<feature type="compositionally biased region" description="Low complexity" evidence="3">
    <location>
        <begin position="174"/>
        <end position="194"/>
    </location>
</feature>
<feature type="splice variant" id="VSP_058037" description="In isoform d." evidence="5">
    <original>CEDDIQWLTDQLNKRVLPA</original>
    <variation>S</variation>
    <location>
        <begin position="14"/>
        <end position="32"/>
    </location>
</feature>
<feature type="splice variant" id="VSP_058038" description="In isoform b and isoform d." evidence="5">
    <original>P</original>
    <variation>PNRCEMSFTEVQ</variation>
    <location>
        <position position="88"/>
    </location>
</feature>
<feature type="splice variant" id="VSP_058039" description="In isoform a and isoform d." evidence="5">
    <location>
        <position position="172"/>
    </location>
</feature>
<feature type="splice variant" id="VSP_058040" description="In isoform b." evidence="5">
    <original>AT</original>
    <variation>GQ</variation>
    <location>
        <begin position="173"/>
        <end position="174"/>
    </location>
</feature>
<feature type="splice variant" id="VSP_058041" description="In isoform b." evidence="5">
    <location>
        <begin position="175"/>
        <end position="194"/>
    </location>
</feature>
<proteinExistence type="inferred from homology"/>
<gene>
    <name evidence="9" type="primary">cdc-26</name>
    <name evidence="9" type="synonym">mat-4</name>
    <name evidence="9" type="synonym">tag-265</name>
    <name evidence="9" type="ORF">B0511.9</name>
</gene>
<organism evidence="6">
    <name type="scientific">Caenorhabditis elegans</name>
    <dbReference type="NCBI Taxonomy" id="6239"/>
    <lineage>
        <taxon>Eukaryota</taxon>
        <taxon>Metazoa</taxon>
        <taxon>Ecdysozoa</taxon>
        <taxon>Nematoda</taxon>
        <taxon>Chromadorea</taxon>
        <taxon>Rhabditida</taxon>
        <taxon>Rhabditina</taxon>
        <taxon>Rhabditomorpha</taxon>
        <taxon>Rhabditoidea</taxon>
        <taxon>Rhabditidae</taxon>
        <taxon>Peloderinae</taxon>
        <taxon>Caenorhabditis</taxon>
    </lineage>
</organism>
<dbReference type="EMBL" id="BX284601">
    <property type="protein sequence ID" value="CCD62107.1"/>
    <property type="molecule type" value="Genomic_DNA"/>
</dbReference>
<dbReference type="EMBL" id="BX284601">
    <property type="protein sequence ID" value="CCD62110.1"/>
    <property type="molecule type" value="Genomic_DNA"/>
</dbReference>
<dbReference type="EMBL" id="BX284601">
    <property type="protein sequence ID" value="CCD62111.1"/>
    <property type="molecule type" value="Genomic_DNA"/>
</dbReference>
<dbReference type="EMBL" id="BX284601">
    <property type="protein sequence ID" value="CCD62112.1"/>
    <property type="molecule type" value="Genomic_DNA"/>
</dbReference>
<dbReference type="RefSeq" id="NP_001251445.1">
    <molecule id="G4RT11-4"/>
    <property type="nucleotide sequence ID" value="NM_001264516.3"/>
</dbReference>
<dbReference type="RefSeq" id="NP_001251447.1">
    <molecule id="G4RT11-1"/>
    <property type="nucleotide sequence ID" value="NM_001264518.2"/>
</dbReference>
<dbReference type="RefSeq" id="NP_740913.3">
    <molecule id="G4RT11-2"/>
    <property type="nucleotide sequence ID" value="NM_170919.7"/>
</dbReference>
<dbReference type="RefSeq" id="NP_740914.2">
    <molecule id="G4RT11-3"/>
    <property type="nucleotide sequence ID" value="NM_171844.7"/>
</dbReference>
<dbReference type="ComplexPortal" id="CPX-3382">
    <property type="entry name" value="Anaphase-promoting complex"/>
</dbReference>
<dbReference type="DIP" id="DIP-26086N"/>
<dbReference type="FunCoup" id="G4RT11">
    <property type="interactions" value="141"/>
</dbReference>
<dbReference type="IntAct" id="G4RT11">
    <property type="interactions" value="4"/>
</dbReference>
<dbReference type="STRING" id="6239.B0511.9c.1"/>
<dbReference type="PaxDb" id="6239-B0511.9c"/>
<dbReference type="PeptideAtlas" id="G4RT11"/>
<dbReference type="EnsemblMetazoa" id="B0511.9a.1">
    <molecule id="G4RT11-2"/>
    <property type="protein sequence ID" value="B0511.9a.1"/>
    <property type="gene ID" value="WBGene00015235"/>
</dbReference>
<dbReference type="EnsemblMetazoa" id="B0511.9b.1">
    <molecule id="G4RT11-3"/>
    <property type="protein sequence ID" value="B0511.9b.1"/>
    <property type="gene ID" value="WBGene00015235"/>
</dbReference>
<dbReference type="EnsemblMetazoa" id="B0511.9c.1">
    <molecule id="G4RT11-1"/>
    <property type="protein sequence ID" value="B0511.9c.1"/>
    <property type="gene ID" value="WBGene00015235"/>
</dbReference>
<dbReference type="EnsemblMetazoa" id="B0511.9d.1">
    <molecule id="G4RT11-4"/>
    <property type="protein sequence ID" value="B0511.9d.1"/>
    <property type="gene ID" value="WBGene00015235"/>
</dbReference>
<dbReference type="GeneID" id="172958"/>
<dbReference type="KEGG" id="cel:CELE_B0511.9"/>
<dbReference type="UCSC" id="B0511.9b">
    <property type="organism name" value="c. elegans"/>
</dbReference>
<dbReference type="AGR" id="WB:WBGene00015235"/>
<dbReference type="CTD" id="172958"/>
<dbReference type="WormBase" id="B0511.9a">
    <molecule id="G4RT11-2"/>
    <property type="protein sequence ID" value="CE44875"/>
    <property type="gene ID" value="WBGene00015235"/>
    <property type="gene designation" value="cdc-26"/>
</dbReference>
<dbReference type="WormBase" id="B0511.9b">
    <molecule id="G4RT11-3"/>
    <property type="protein sequence ID" value="CE41861"/>
    <property type="gene ID" value="WBGene00015235"/>
    <property type="gene designation" value="cdc-26"/>
</dbReference>
<dbReference type="WormBase" id="B0511.9c">
    <molecule id="G4RT11-1"/>
    <property type="protein sequence ID" value="CE26854"/>
    <property type="gene ID" value="WBGene00015235"/>
    <property type="gene designation" value="cdc-26"/>
</dbReference>
<dbReference type="WormBase" id="B0511.9d">
    <molecule id="G4RT11-4"/>
    <property type="protein sequence ID" value="CE46530"/>
    <property type="gene ID" value="WBGene00015235"/>
    <property type="gene designation" value="cdc-26"/>
</dbReference>
<dbReference type="eggNOG" id="ENOG502TEJ1">
    <property type="taxonomic scope" value="Eukaryota"/>
</dbReference>
<dbReference type="InParanoid" id="G4RT11"/>
<dbReference type="OMA" id="IDEMEPM"/>
<dbReference type="OrthoDB" id="5819975at2759"/>
<dbReference type="UniPathway" id="UPA00143"/>
<dbReference type="PRO" id="PR:G4RT11"/>
<dbReference type="Proteomes" id="UP000001940">
    <property type="component" value="Chromosome I"/>
</dbReference>
<dbReference type="Bgee" id="WBGene00015235">
    <property type="expression patterns" value="Expressed in embryo and 4 other cell types or tissues"/>
</dbReference>
<dbReference type="GO" id="GO:0005680">
    <property type="term" value="C:anaphase-promoting complex"/>
    <property type="evidence" value="ECO:0000303"/>
    <property type="project" value="ComplexPortal"/>
</dbReference>
<dbReference type="GO" id="GO:0031145">
    <property type="term" value="P:anaphase-promoting complex-dependent catabolic process"/>
    <property type="evidence" value="ECO:0000303"/>
    <property type="project" value="ComplexPortal"/>
</dbReference>
<dbReference type="GO" id="GO:0051301">
    <property type="term" value="P:cell division"/>
    <property type="evidence" value="ECO:0007669"/>
    <property type="project" value="UniProtKB-KW"/>
</dbReference>
<dbReference type="GO" id="GO:0051321">
    <property type="term" value="P:meiotic cell cycle"/>
    <property type="evidence" value="ECO:0007669"/>
    <property type="project" value="UniProtKB-KW"/>
</dbReference>
<dbReference type="GO" id="GO:0016567">
    <property type="term" value="P:protein ubiquitination"/>
    <property type="evidence" value="ECO:0007669"/>
    <property type="project" value="UniProtKB-UniPathway"/>
</dbReference>
<dbReference type="GO" id="GO:0051445">
    <property type="term" value="P:regulation of meiotic cell cycle"/>
    <property type="evidence" value="ECO:0000303"/>
    <property type="project" value="ComplexPortal"/>
</dbReference>
<dbReference type="GO" id="GO:0007346">
    <property type="term" value="P:regulation of mitotic cell cycle"/>
    <property type="evidence" value="ECO:0000303"/>
    <property type="project" value="ComplexPortal"/>
</dbReference>
<protein>
    <recommendedName>
        <fullName evidence="2">Anaphase-promoting complex subunit CDC26</fullName>
    </recommendedName>
    <alternativeName>
        <fullName evidence="2">Cell division cycle protein 26 homolog</fullName>
    </alternativeName>
</protein>
<evidence type="ECO:0000250" key="1">
    <source>
        <dbReference type="UniProtKB" id="P14724"/>
    </source>
</evidence>
<evidence type="ECO:0000250" key="2">
    <source>
        <dbReference type="UniProtKB" id="Q8NHZ8"/>
    </source>
</evidence>
<evidence type="ECO:0000256" key="3">
    <source>
        <dbReference type="SAM" id="MobiDB-lite"/>
    </source>
</evidence>
<evidence type="ECO:0000269" key="4">
    <source>
    </source>
</evidence>
<evidence type="ECO:0000305" key="5"/>
<evidence type="ECO:0000312" key="6">
    <source>
        <dbReference type="Proteomes" id="UP000001940"/>
    </source>
</evidence>
<evidence type="ECO:0000312" key="7">
    <source>
        <dbReference type="WormBase" id="B0511.9a"/>
    </source>
</evidence>
<evidence type="ECO:0000312" key="8">
    <source>
        <dbReference type="WormBase" id="B0511.9b"/>
    </source>
</evidence>
<evidence type="ECO:0000312" key="9">
    <source>
        <dbReference type="WormBase" id="B0511.9c"/>
    </source>
</evidence>
<evidence type="ECO:0000312" key="10">
    <source>
        <dbReference type="WormBase" id="B0511.9d"/>
    </source>
</evidence>
<comment type="function">
    <text evidence="4">Probable component of the anaphase promoting complex/cyclosome (APC/C), a cell cycle-regulated E3 ubiquitin ligase that controls progression through mitosis and the G1 phase of the cell cycle. The APC/C complex acts by mediating ubiquitination and subsequent degradation of target proteins. Developmental role in early embryogenesis and the metaphase to anaphase transition in meiosis and mitosis. Required for embryonic anterior-posterior axis formation.</text>
</comment>
<comment type="pathway">
    <text evidence="5">Protein modification; protein ubiquitination.</text>
</comment>
<comment type="subunit">
    <text evidence="5">The APC/C complex is probably composed of at least 12 subunits: apc-2, apc-10, apc-11, cdc-26, emb-1, emb-27, emb-30, mat-1, mat-2, mat-3, such-1 and gfi-3.</text>
</comment>
<comment type="subcellular location">
    <subcellularLocation>
        <location evidence="1">Nucleus</location>
    </subcellularLocation>
</comment>
<comment type="alternative products">
    <event type="alternative splicing"/>
    <isoform>
        <id>G4RT11-1</id>
        <name evidence="9">c</name>
        <sequence type="displayed"/>
    </isoform>
    <isoform>
        <id>G4RT11-2</id>
        <name evidence="7">a</name>
        <sequence type="described" ref="VSP_058039"/>
    </isoform>
    <isoform>
        <id>G4RT11-3</id>
        <name evidence="8">b</name>
        <sequence type="described" ref="VSP_058038 VSP_058040 VSP_058041"/>
    </isoform>
    <isoform>
        <id>G4RT11-4</id>
        <name evidence="10">d</name>
        <sequence type="described" ref="VSP_058037 VSP_058038 VSP_058039"/>
    </isoform>
</comment>
<comment type="disruption phenotype">
    <text evidence="4">RNAi-mediated knockdown results in arrest at metaphase during meiosis I in early embryos. Defective embryonic polarity due to improper first cell division.</text>
</comment>
<comment type="similarity">
    <text evidence="5">Belongs to the CDC26 family.</text>
</comment>
<sequence>MSMLRRPLTQLELCEDDIQWLTDQLNKRVLPAVIVPKCEMMDIDEMEPMDQSEPPRGITRRNLRSADRKNRDVPGPSTGECTRTSIAPTLTSARTPVAAPTLTLSTPVNPVSSAEMLRVMPPRVGRRPRASRSGDNDSPLLFNAYDTPQQGINDESPTPSDSPESPNAHLYGATPGNPTSTSGGPSSNTRSHRH</sequence>
<accession>G4RT11</accession>
<accession>A9D8E6</accession>
<accession>G4RT06</accession>
<accession>H2KYB5</accession>
<keyword id="KW-0025">Alternative splicing</keyword>
<keyword id="KW-0131">Cell cycle</keyword>
<keyword id="KW-0132">Cell division</keyword>
<keyword id="KW-0217">Developmental protein</keyword>
<keyword id="KW-0469">Meiosis</keyword>
<keyword id="KW-0498">Mitosis</keyword>
<keyword id="KW-0539">Nucleus</keyword>
<keyword id="KW-1185">Reference proteome</keyword>
<keyword id="KW-0833">Ubl conjugation pathway</keyword>
<reference evidence="6" key="1">
    <citation type="journal article" date="1998" name="Science">
        <title>Genome sequence of the nematode C. elegans: a platform for investigating biology.</title>
        <authorList>
            <consortium name="The C. elegans sequencing consortium"/>
        </authorList>
    </citation>
    <scope>NUCLEOTIDE SEQUENCE [LARGE SCALE GENOMIC DNA]</scope>
    <source>
        <strain evidence="6">Bristol N2</strain>
    </source>
</reference>
<reference evidence="5" key="2">
    <citation type="journal article" date="2007" name="BMC Dev. Biol.">
        <title>Identification of the C. elegans anaphase promoting complex subunit Cdc26 by phenotypic profiling and functional rescue in yeast.</title>
        <authorList>
            <person name="Dong Y."/>
            <person name="Bogdanova A."/>
            <person name="Habermann B."/>
            <person name="Zachariae W."/>
            <person name="Ahringer J."/>
        </authorList>
    </citation>
    <scope>FUNCTION</scope>
    <scope>DISRUPTION PHENOTYPE</scope>
</reference>